<sequence length="133" mass="15023">MGLTSQLIPTLVCLLACTSNFVHGHKCDITLQEIIKTLNILTARKNSCMELPVTDVFAAPENTTEKETFCRASTVLRHIYRHHTCMKSLLSGLDRNLSSMANMTCSVHEAKKSTLKDFLERLKTIMKEKYSKC</sequence>
<reference key="1">
    <citation type="journal article" date="1993" name="Biochim. Biophys. Acta">
        <title>Nucleotide and deduced amino acid sequence of porcine interleukin 4 cDNA derived from lamina propria lymphocytes.</title>
        <authorList>
            <person name="Bailey M."/>
            <person name="Perry A.C.F."/>
            <person name="Bland P.W."/>
            <person name="Stokes C.R."/>
            <person name="Hall L."/>
        </authorList>
    </citation>
    <scope>NUCLEOTIDE SEQUENCE [MRNA]</scope>
</reference>
<reference key="2">
    <citation type="submission" date="1993-03" db="EMBL/GenBank/DDBJ databases">
        <authorList>
            <person name="Zhou Y."/>
            <person name="Murtaugh M.P."/>
        </authorList>
    </citation>
    <scope>NUCLEOTIDE SEQUENCE [MRNA]</scope>
</reference>
<reference key="3">
    <citation type="submission" date="2002-03" db="EMBL/GenBank/DDBJ databases">
        <title>Cloning and sequence analysis of interleukin-4 gene from Chenghua swine.</title>
        <authorList>
            <person name="Liu S."/>
            <person name="Wu M."/>
            <person name="Gao R."/>
            <person name="Li J."/>
            <person name="Tang M."/>
            <person name="Long Z."/>
            <person name="Meng M."/>
        </authorList>
    </citation>
    <scope>NUCLEOTIDE SEQUENCE [MRNA]</scope>
    <source>
        <strain>Chenghua</strain>
        <tissue>Blood</tissue>
    </source>
</reference>
<proteinExistence type="evidence at transcript level"/>
<feature type="signal peptide" evidence="1">
    <location>
        <begin position="1"/>
        <end position="24"/>
    </location>
</feature>
<feature type="chain" id="PRO_0000015541" description="Interleukin-4">
    <location>
        <begin position="25"/>
        <end position="133"/>
    </location>
</feature>
<feature type="glycosylation site" description="N-linked (GlcNAc...) asparagine" evidence="3">
    <location>
        <position position="62"/>
    </location>
</feature>
<feature type="disulfide bond" evidence="1">
    <location>
        <begin position="27"/>
        <end position="133"/>
    </location>
</feature>
<feature type="disulfide bond" evidence="1">
    <location>
        <begin position="48"/>
        <end position="85"/>
    </location>
</feature>
<feature type="disulfide bond" evidence="1">
    <location>
        <begin position="70"/>
        <end position="105"/>
    </location>
</feature>
<feature type="sequence conflict" description="In Ref. 3; AAM27191." evidence="4" ref="3">
    <original>K</original>
    <variation>E</variation>
    <location>
        <position position="45"/>
    </location>
</feature>
<feature type="sequence conflict" description="In Ref. 2; AAA31055." evidence="4" ref="2">
    <original>VT</original>
    <variation>GD</variation>
    <location>
        <begin position="53"/>
        <end position="54"/>
    </location>
</feature>
<feature type="sequence conflict" description="In Ref. 2; AAA31055." evidence="4" ref="2">
    <original>T</original>
    <variation>R</variation>
    <location>
        <position position="64"/>
    </location>
</feature>
<accession>Q04745</accession>
<accession>Q29054</accession>
<accession>Q8MKE6</accession>
<evidence type="ECO:0000250" key="1"/>
<evidence type="ECO:0000250" key="2">
    <source>
        <dbReference type="UniProtKB" id="P07750"/>
    </source>
</evidence>
<evidence type="ECO:0000255" key="3"/>
<evidence type="ECO:0000305" key="4"/>
<protein>
    <recommendedName>
        <fullName>Interleukin-4</fullName>
        <shortName>IL-4</shortName>
    </recommendedName>
    <alternativeName>
        <fullName>B-cell stimulatory factor 1</fullName>
        <shortName>BSF-1</shortName>
    </alternativeName>
    <alternativeName>
        <fullName>Lymphocyte stimulatory factor 1</fullName>
    </alternativeName>
</protein>
<comment type="function">
    <text evidence="2">Participates in at least several B-cell activation processes as well as of other cell types. It is a costimulator of DNA-synthesis. It induces the expression of class II MHC molecules on resting B-cells. It enhances both secretion and cell surface expression of IgE and IgG1. It also regulates the expression of the low affinity Fc receptor for IgE (CD23) on both lymphocytes and monocytes. Positively regulates IL31RA expression in macrophages. Stimulates autophagy in dendritic cells by interfering with mTORC1 signaling and through the induction of RUFY4.</text>
</comment>
<comment type="subcellular location">
    <subcellularLocation>
        <location>Secreted</location>
    </subcellularLocation>
</comment>
<comment type="similarity">
    <text evidence="4">Belongs to the IL-4/IL-13 family.</text>
</comment>
<gene>
    <name type="primary">IL4</name>
</gene>
<organism>
    <name type="scientific">Sus scrofa</name>
    <name type="common">Pig</name>
    <dbReference type="NCBI Taxonomy" id="9823"/>
    <lineage>
        <taxon>Eukaryota</taxon>
        <taxon>Metazoa</taxon>
        <taxon>Chordata</taxon>
        <taxon>Craniata</taxon>
        <taxon>Vertebrata</taxon>
        <taxon>Euteleostomi</taxon>
        <taxon>Mammalia</taxon>
        <taxon>Eutheria</taxon>
        <taxon>Laurasiatheria</taxon>
        <taxon>Artiodactyla</taxon>
        <taxon>Suina</taxon>
        <taxon>Suidae</taxon>
        <taxon>Sus</taxon>
    </lineage>
</organism>
<dbReference type="EMBL" id="X68330">
    <property type="protein sequence ID" value="CAA48407.1"/>
    <property type="molecule type" value="mRNA"/>
</dbReference>
<dbReference type="EMBL" id="L12991">
    <property type="protein sequence ID" value="AAA31055.1"/>
    <property type="molecule type" value="mRNA"/>
</dbReference>
<dbReference type="EMBL" id="AF493991">
    <property type="protein sequence ID" value="AAM27191.1"/>
    <property type="molecule type" value="mRNA"/>
</dbReference>
<dbReference type="PIR" id="S28187">
    <property type="entry name" value="S28187"/>
</dbReference>
<dbReference type="RefSeq" id="NP_999288.1">
    <property type="nucleotide sequence ID" value="NM_214123.1"/>
</dbReference>
<dbReference type="SMR" id="Q04745"/>
<dbReference type="FunCoup" id="Q04745">
    <property type="interactions" value="263"/>
</dbReference>
<dbReference type="STRING" id="9823.ENSSSCP00000015193"/>
<dbReference type="GlyCosmos" id="Q04745">
    <property type="glycosylation" value="1 site, No reported glycans"/>
</dbReference>
<dbReference type="GlyGen" id="Q04745">
    <property type="glycosylation" value="1 site"/>
</dbReference>
<dbReference type="PaxDb" id="9823-ENSSSCP00000015193"/>
<dbReference type="Ensembl" id="ENSSSCT00000015605.3">
    <property type="protein sequence ID" value="ENSSSCP00000015193.1"/>
    <property type="gene ID" value="ENSSSCG00000014282.3"/>
</dbReference>
<dbReference type="Ensembl" id="ENSSSCT00025077978.1">
    <property type="protein sequence ID" value="ENSSSCP00025033801.1"/>
    <property type="gene ID" value="ENSSSCG00025056992.1"/>
</dbReference>
<dbReference type="Ensembl" id="ENSSSCT00035029644.1">
    <property type="protein sequence ID" value="ENSSSCP00035011462.1"/>
    <property type="gene ID" value="ENSSSCG00035022691.1"/>
</dbReference>
<dbReference type="Ensembl" id="ENSSSCT00045024617.1">
    <property type="protein sequence ID" value="ENSSSCP00045017009.1"/>
    <property type="gene ID" value="ENSSSCG00045014434.1"/>
</dbReference>
<dbReference type="Ensembl" id="ENSSSCT00065029701.1">
    <property type="protein sequence ID" value="ENSSSCP00065012139.1"/>
    <property type="gene ID" value="ENSSSCG00065022324.1"/>
</dbReference>
<dbReference type="Ensembl" id="ENSSSCT00070039772.1">
    <property type="protein sequence ID" value="ENSSSCP00070033314.1"/>
    <property type="gene ID" value="ENSSSCG00070020063.1"/>
</dbReference>
<dbReference type="Ensembl" id="ENSSSCT00085049033">
    <property type="protein sequence ID" value="ENSSSCP00085034388"/>
    <property type="gene ID" value="ENSSSCG00085025505"/>
</dbReference>
<dbReference type="Ensembl" id="ENSSSCT00090048982">
    <property type="protein sequence ID" value="ENSSSCP00090030379"/>
    <property type="gene ID" value="ENSSSCG00090027716"/>
</dbReference>
<dbReference type="Ensembl" id="ENSSSCT00105059456">
    <property type="protein sequence ID" value="ENSSSCP00105041890"/>
    <property type="gene ID" value="ENSSSCG00105031344"/>
</dbReference>
<dbReference type="Ensembl" id="ENSSSCT00110019478">
    <property type="protein sequence ID" value="ENSSSCP00110013250"/>
    <property type="gene ID" value="ENSSSCG00110010067"/>
</dbReference>
<dbReference type="Ensembl" id="ENSSSCT00115027825">
    <property type="protein sequence ID" value="ENSSSCP00115026382"/>
    <property type="gene ID" value="ENSSSCG00115015915"/>
</dbReference>
<dbReference type="Ensembl" id="ENSSSCT00130068650">
    <property type="protein sequence ID" value="ENSSSCP00130049369"/>
    <property type="gene ID" value="ENSSSCG00130035104"/>
</dbReference>
<dbReference type="GeneID" id="397225"/>
<dbReference type="KEGG" id="ssc:397225"/>
<dbReference type="CTD" id="3565"/>
<dbReference type="VGNC" id="VGNC:89108">
    <property type="gene designation" value="IL4"/>
</dbReference>
<dbReference type="eggNOG" id="KOG3886">
    <property type="taxonomic scope" value="Eukaryota"/>
</dbReference>
<dbReference type="GeneTree" id="ENSGT00390000013108"/>
<dbReference type="HOGENOM" id="CLU_154691_0_0_1"/>
<dbReference type="InParanoid" id="Q04745"/>
<dbReference type="OrthoDB" id="3176171at2759"/>
<dbReference type="TreeFam" id="TF336383"/>
<dbReference type="Reactome" id="R-SSC-6785807">
    <property type="pathway name" value="Interleukin-4 and Interleukin-13 signaling"/>
</dbReference>
<dbReference type="Proteomes" id="UP000008227">
    <property type="component" value="Chromosome 2"/>
</dbReference>
<dbReference type="Proteomes" id="UP000314985">
    <property type="component" value="Chromosome 2"/>
</dbReference>
<dbReference type="Proteomes" id="UP000694570">
    <property type="component" value="Unplaced"/>
</dbReference>
<dbReference type="Proteomes" id="UP000694571">
    <property type="component" value="Unplaced"/>
</dbReference>
<dbReference type="Proteomes" id="UP000694720">
    <property type="component" value="Unplaced"/>
</dbReference>
<dbReference type="Proteomes" id="UP000694722">
    <property type="component" value="Unplaced"/>
</dbReference>
<dbReference type="Proteomes" id="UP000694723">
    <property type="component" value="Unplaced"/>
</dbReference>
<dbReference type="Proteomes" id="UP000694724">
    <property type="component" value="Unplaced"/>
</dbReference>
<dbReference type="Proteomes" id="UP000694725">
    <property type="component" value="Unplaced"/>
</dbReference>
<dbReference type="Proteomes" id="UP000694726">
    <property type="component" value="Unplaced"/>
</dbReference>
<dbReference type="Proteomes" id="UP000694727">
    <property type="component" value="Unplaced"/>
</dbReference>
<dbReference type="Proteomes" id="UP000694728">
    <property type="component" value="Unplaced"/>
</dbReference>
<dbReference type="Bgee" id="ENSSSCG00000014282">
    <property type="expression patterns" value="Expressed in pituitary gland and 7 other cell types or tissues"/>
</dbReference>
<dbReference type="GO" id="GO:0005615">
    <property type="term" value="C:extracellular space"/>
    <property type="evidence" value="ECO:0007669"/>
    <property type="project" value="UniProtKB-KW"/>
</dbReference>
<dbReference type="GO" id="GO:0005125">
    <property type="term" value="F:cytokine activity"/>
    <property type="evidence" value="ECO:0007669"/>
    <property type="project" value="UniProtKB-KW"/>
</dbReference>
<dbReference type="GO" id="GO:0008083">
    <property type="term" value="F:growth factor activity"/>
    <property type="evidence" value="ECO:0007669"/>
    <property type="project" value="UniProtKB-KW"/>
</dbReference>
<dbReference type="GO" id="GO:0005136">
    <property type="term" value="F:interleukin-4 receptor binding"/>
    <property type="evidence" value="ECO:0007669"/>
    <property type="project" value="InterPro"/>
</dbReference>
<dbReference type="GO" id="GO:0042113">
    <property type="term" value="P:B cell activation"/>
    <property type="evidence" value="ECO:0007669"/>
    <property type="project" value="UniProtKB-KW"/>
</dbReference>
<dbReference type="GO" id="GO:0007259">
    <property type="term" value="P:cell surface receptor signaling pathway via JAK-STAT"/>
    <property type="evidence" value="ECO:0007669"/>
    <property type="project" value="Ensembl"/>
</dbReference>
<dbReference type="GO" id="GO:0006955">
    <property type="term" value="P:immune response"/>
    <property type="evidence" value="ECO:0007669"/>
    <property type="project" value="InterPro"/>
</dbReference>
<dbReference type="GO" id="GO:0035771">
    <property type="term" value="P:interleukin-4-mediated signaling pathway"/>
    <property type="evidence" value="ECO:0000318"/>
    <property type="project" value="GO_Central"/>
</dbReference>
<dbReference type="GO" id="GO:0042116">
    <property type="term" value="P:macrophage activation"/>
    <property type="evidence" value="ECO:0007669"/>
    <property type="project" value="Ensembl"/>
</dbReference>
<dbReference type="GO" id="GO:0043011">
    <property type="term" value="P:myeloid dendritic cell differentiation"/>
    <property type="evidence" value="ECO:0007669"/>
    <property type="project" value="Ensembl"/>
</dbReference>
<dbReference type="GO" id="GO:1903845">
    <property type="term" value="P:negative regulation of cellular response to transforming growth factor beta stimulus"/>
    <property type="evidence" value="ECO:0007669"/>
    <property type="project" value="Ensembl"/>
</dbReference>
<dbReference type="GO" id="GO:1903660">
    <property type="term" value="P:negative regulation of complement-dependent cytotoxicity"/>
    <property type="evidence" value="ECO:0000315"/>
    <property type="project" value="AgBase"/>
</dbReference>
<dbReference type="GO" id="GO:2000352">
    <property type="term" value="P:negative regulation of endothelial cell apoptotic process"/>
    <property type="evidence" value="ECO:0000315"/>
    <property type="project" value="AgBase"/>
</dbReference>
<dbReference type="GO" id="GO:0010633">
    <property type="term" value="P:negative regulation of epithelial cell migration"/>
    <property type="evidence" value="ECO:0007669"/>
    <property type="project" value="Ensembl"/>
</dbReference>
<dbReference type="GO" id="GO:0050728">
    <property type="term" value="P:negative regulation of inflammatory response"/>
    <property type="evidence" value="ECO:0000318"/>
    <property type="project" value="GO_Central"/>
</dbReference>
<dbReference type="GO" id="GO:0000122">
    <property type="term" value="P:negative regulation of transcription by RNA polymerase II"/>
    <property type="evidence" value="ECO:0007669"/>
    <property type="project" value="Ensembl"/>
</dbReference>
<dbReference type="GO" id="GO:0030335">
    <property type="term" value="P:positive regulation of cell migration"/>
    <property type="evidence" value="ECO:0007669"/>
    <property type="project" value="Ensembl"/>
</dbReference>
<dbReference type="GO" id="GO:0008284">
    <property type="term" value="P:positive regulation of cell population proliferation"/>
    <property type="evidence" value="ECO:0007669"/>
    <property type="project" value="Ensembl"/>
</dbReference>
<dbReference type="GO" id="GO:0045893">
    <property type="term" value="P:positive regulation of DNA-templated transcription"/>
    <property type="evidence" value="ECO:0000318"/>
    <property type="project" value="GO_Central"/>
</dbReference>
<dbReference type="GO" id="GO:1903142">
    <property type="term" value="P:positive regulation of establishment of endothelial barrier"/>
    <property type="evidence" value="ECO:0000315"/>
    <property type="project" value="AgBase"/>
</dbReference>
<dbReference type="GO" id="GO:0010628">
    <property type="term" value="P:positive regulation of gene expression"/>
    <property type="evidence" value="ECO:0000315"/>
    <property type="project" value="AgBase"/>
</dbReference>
<dbReference type="GO" id="GO:0032733">
    <property type="term" value="P:positive regulation of interleukin-10 production"/>
    <property type="evidence" value="ECO:0007669"/>
    <property type="project" value="Ensembl"/>
</dbReference>
<dbReference type="GO" id="GO:0032736">
    <property type="term" value="P:positive regulation of interleukin-13 production"/>
    <property type="evidence" value="ECO:0007669"/>
    <property type="project" value="Ensembl"/>
</dbReference>
<dbReference type="GO" id="GO:0016239">
    <property type="term" value="P:positive regulation of macroautophagy"/>
    <property type="evidence" value="ECO:0000250"/>
    <property type="project" value="UniProtKB"/>
</dbReference>
<dbReference type="GO" id="GO:0001934">
    <property type="term" value="P:positive regulation of protein phosphorylation"/>
    <property type="evidence" value="ECO:0000315"/>
    <property type="project" value="AgBase"/>
</dbReference>
<dbReference type="GO" id="GO:0046427">
    <property type="term" value="P:positive regulation of receptor signaling pathway via JAK-STAT"/>
    <property type="evidence" value="ECO:0000315"/>
    <property type="project" value="AgBase"/>
</dbReference>
<dbReference type="GO" id="GO:0045582">
    <property type="term" value="P:positive regulation of T cell differentiation"/>
    <property type="evidence" value="ECO:0007669"/>
    <property type="project" value="Ensembl"/>
</dbReference>
<dbReference type="GO" id="GO:2000553">
    <property type="term" value="P:positive regulation of T-helper 2 cell cytokine production"/>
    <property type="evidence" value="ECO:0007669"/>
    <property type="project" value="Ensembl"/>
</dbReference>
<dbReference type="GO" id="GO:0045944">
    <property type="term" value="P:positive regulation of transcription by RNA polymerase II"/>
    <property type="evidence" value="ECO:0007669"/>
    <property type="project" value="Ensembl"/>
</dbReference>
<dbReference type="GO" id="GO:0050776">
    <property type="term" value="P:regulation of immune response"/>
    <property type="evidence" value="ECO:0000318"/>
    <property type="project" value="GO_Central"/>
</dbReference>
<dbReference type="GO" id="GO:0046825">
    <property type="term" value="P:regulation of protein export from nucleus"/>
    <property type="evidence" value="ECO:0000315"/>
    <property type="project" value="AgBase"/>
</dbReference>
<dbReference type="GO" id="GO:0042110">
    <property type="term" value="P:T cell activation"/>
    <property type="evidence" value="ECO:0007669"/>
    <property type="project" value="Ensembl"/>
</dbReference>
<dbReference type="FunFam" id="1.20.1250.10:FF:000014">
    <property type="entry name" value="Interleukin-4"/>
    <property type="match status" value="1"/>
</dbReference>
<dbReference type="Gene3D" id="1.20.1250.10">
    <property type="match status" value="1"/>
</dbReference>
<dbReference type="InterPro" id="IPR009079">
    <property type="entry name" value="4_helix_cytokine-like_core"/>
</dbReference>
<dbReference type="InterPro" id="IPR002354">
    <property type="entry name" value="IL-4"/>
</dbReference>
<dbReference type="InterPro" id="IPR001325">
    <property type="entry name" value="IL-4/IL-13"/>
</dbReference>
<dbReference type="InterPro" id="IPR018096">
    <property type="entry name" value="IL-4/IL-13_CS"/>
</dbReference>
<dbReference type="PANTHER" id="PTHR47401">
    <property type="entry name" value="INTERLEUKIN-4"/>
    <property type="match status" value="1"/>
</dbReference>
<dbReference type="PANTHER" id="PTHR47401:SF1">
    <property type="entry name" value="INTERLEUKIN-4"/>
    <property type="match status" value="1"/>
</dbReference>
<dbReference type="Pfam" id="PF00727">
    <property type="entry name" value="IL4"/>
    <property type="match status" value="1"/>
</dbReference>
<dbReference type="PIRSF" id="PIRSF001941">
    <property type="entry name" value="Interleukin_4"/>
    <property type="match status" value="1"/>
</dbReference>
<dbReference type="PRINTS" id="PR00431">
    <property type="entry name" value="INTERLEUKIN4"/>
</dbReference>
<dbReference type="SMART" id="SM00190">
    <property type="entry name" value="IL4_13"/>
    <property type="match status" value="1"/>
</dbReference>
<dbReference type="SUPFAM" id="SSF47266">
    <property type="entry name" value="4-helical cytokines"/>
    <property type="match status" value="1"/>
</dbReference>
<dbReference type="PROSITE" id="PS00838">
    <property type="entry name" value="INTERLEUKIN_4_13"/>
    <property type="match status" value="1"/>
</dbReference>
<name>IL4_PIG</name>
<keyword id="KW-0075">B-cell activation</keyword>
<keyword id="KW-0202">Cytokine</keyword>
<keyword id="KW-1015">Disulfide bond</keyword>
<keyword id="KW-0325">Glycoprotein</keyword>
<keyword id="KW-0339">Growth factor</keyword>
<keyword id="KW-1185">Reference proteome</keyword>
<keyword id="KW-0964">Secreted</keyword>
<keyword id="KW-0732">Signal</keyword>